<name>EFP_SYNS3</name>
<protein>
    <recommendedName>
        <fullName evidence="1">Elongation factor P</fullName>
        <shortName evidence="1">EF-P</shortName>
    </recommendedName>
</protein>
<feature type="chain" id="PRO_1000010886" description="Elongation factor P">
    <location>
        <begin position="1"/>
        <end position="187"/>
    </location>
</feature>
<reference key="1">
    <citation type="journal article" date="2006" name="Proc. Natl. Acad. Sci. U.S.A.">
        <title>Genome sequence of Synechococcus CC9311: insights into adaptation to a coastal environment.</title>
        <authorList>
            <person name="Palenik B."/>
            <person name="Ren Q."/>
            <person name="Dupont C.L."/>
            <person name="Myers G.S."/>
            <person name="Heidelberg J.F."/>
            <person name="Badger J.H."/>
            <person name="Madupu R."/>
            <person name="Nelson W.C."/>
            <person name="Brinkac L.M."/>
            <person name="Dodson R.J."/>
            <person name="Durkin A.S."/>
            <person name="Daugherty S.C."/>
            <person name="Sullivan S.A."/>
            <person name="Khouri H."/>
            <person name="Mohamoud Y."/>
            <person name="Halpin R."/>
            <person name="Paulsen I.T."/>
        </authorList>
    </citation>
    <scope>NUCLEOTIDE SEQUENCE [LARGE SCALE GENOMIC DNA]</scope>
    <source>
        <strain>CC9311</strain>
    </source>
</reference>
<dbReference type="EMBL" id="CP000435">
    <property type="protein sequence ID" value="ABI47842.1"/>
    <property type="molecule type" value="Genomic_DNA"/>
</dbReference>
<dbReference type="RefSeq" id="WP_011618023.1">
    <property type="nucleotide sequence ID" value="NC_008319.1"/>
</dbReference>
<dbReference type="SMR" id="Q0IE51"/>
<dbReference type="STRING" id="64471.sync_0032"/>
<dbReference type="KEGG" id="syg:sync_0032"/>
<dbReference type="eggNOG" id="COG0231">
    <property type="taxonomic scope" value="Bacteria"/>
</dbReference>
<dbReference type="HOGENOM" id="CLU_074944_0_1_3"/>
<dbReference type="OrthoDB" id="9801844at2"/>
<dbReference type="UniPathway" id="UPA00345"/>
<dbReference type="Proteomes" id="UP000001961">
    <property type="component" value="Chromosome"/>
</dbReference>
<dbReference type="GO" id="GO:0005737">
    <property type="term" value="C:cytoplasm"/>
    <property type="evidence" value="ECO:0007669"/>
    <property type="project" value="UniProtKB-SubCell"/>
</dbReference>
<dbReference type="GO" id="GO:0003746">
    <property type="term" value="F:translation elongation factor activity"/>
    <property type="evidence" value="ECO:0007669"/>
    <property type="project" value="UniProtKB-UniRule"/>
</dbReference>
<dbReference type="GO" id="GO:0043043">
    <property type="term" value="P:peptide biosynthetic process"/>
    <property type="evidence" value="ECO:0007669"/>
    <property type="project" value="InterPro"/>
</dbReference>
<dbReference type="CDD" id="cd04470">
    <property type="entry name" value="S1_EF-P_repeat_1"/>
    <property type="match status" value="1"/>
</dbReference>
<dbReference type="CDD" id="cd05794">
    <property type="entry name" value="S1_EF-P_repeat_2"/>
    <property type="match status" value="1"/>
</dbReference>
<dbReference type="FunFam" id="2.30.30.30:FF:000003">
    <property type="entry name" value="Elongation factor P"/>
    <property type="match status" value="1"/>
</dbReference>
<dbReference type="FunFam" id="2.40.50.140:FF:000004">
    <property type="entry name" value="Elongation factor P"/>
    <property type="match status" value="1"/>
</dbReference>
<dbReference type="FunFam" id="2.40.50.140:FF:000009">
    <property type="entry name" value="Elongation factor P"/>
    <property type="match status" value="1"/>
</dbReference>
<dbReference type="Gene3D" id="2.30.30.30">
    <property type="match status" value="1"/>
</dbReference>
<dbReference type="Gene3D" id="2.40.50.140">
    <property type="entry name" value="Nucleic acid-binding proteins"/>
    <property type="match status" value="2"/>
</dbReference>
<dbReference type="HAMAP" id="MF_00141">
    <property type="entry name" value="EF_P"/>
    <property type="match status" value="1"/>
</dbReference>
<dbReference type="InterPro" id="IPR015365">
    <property type="entry name" value="Elong-fact-P_C"/>
</dbReference>
<dbReference type="InterPro" id="IPR012340">
    <property type="entry name" value="NA-bd_OB-fold"/>
</dbReference>
<dbReference type="InterPro" id="IPR014722">
    <property type="entry name" value="Rib_uL2_dom2"/>
</dbReference>
<dbReference type="InterPro" id="IPR020599">
    <property type="entry name" value="Transl_elong_fac_P/YeiP"/>
</dbReference>
<dbReference type="InterPro" id="IPR013185">
    <property type="entry name" value="Transl_elong_KOW-like"/>
</dbReference>
<dbReference type="InterPro" id="IPR001059">
    <property type="entry name" value="Transl_elong_P/YeiP_cen"/>
</dbReference>
<dbReference type="InterPro" id="IPR013852">
    <property type="entry name" value="Transl_elong_P/YeiP_CS"/>
</dbReference>
<dbReference type="InterPro" id="IPR011768">
    <property type="entry name" value="Transl_elongation_fac_P"/>
</dbReference>
<dbReference type="InterPro" id="IPR008991">
    <property type="entry name" value="Translation_prot_SH3-like_sf"/>
</dbReference>
<dbReference type="NCBIfam" id="TIGR00038">
    <property type="entry name" value="efp"/>
    <property type="match status" value="1"/>
</dbReference>
<dbReference type="NCBIfam" id="NF001810">
    <property type="entry name" value="PRK00529.1"/>
    <property type="match status" value="1"/>
</dbReference>
<dbReference type="PANTHER" id="PTHR30053">
    <property type="entry name" value="ELONGATION FACTOR P"/>
    <property type="match status" value="1"/>
</dbReference>
<dbReference type="PANTHER" id="PTHR30053:SF12">
    <property type="entry name" value="ELONGATION FACTOR P (EF-P) FAMILY PROTEIN"/>
    <property type="match status" value="1"/>
</dbReference>
<dbReference type="Pfam" id="PF01132">
    <property type="entry name" value="EFP"/>
    <property type="match status" value="1"/>
</dbReference>
<dbReference type="Pfam" id="PF08207">
    <property type="entry name" value="EFP_N"/>
    <property type="match status" value="1"/>
</dbReference>
<dbReference type="Pfam" id="PF09285">
    <property type="entry name" value="Elong-fact-P_C"/>
    <property type="match status" value="1"/>
</dbReference>
<dbReference type="PIRSF" id="PIRSF005901">
    <property type="entry name" value="EF-P"/>
    <property type="match status" value="1"/>
</dbReference>
<dbReference type="SMART" id="SM01185">
    <property type="entry name" value="EFP"/>
    <property type="match status" value="1"/>
</dbReference>
<dbReference type="SMART" id="SM00841">
    <property type="entry name" value="Elong-fact-P_C"/>
    <property type="match status" value="1"/>
</dbReference>
<dbReference type="SUPFAM" id="SSF50249">
    <property type="entry name" value="Nucleic acid-binding proteins"/>
    <property type="match status" value="2"/>
</dbReference>
<dbReference type="SUPFAM" id="SSF50104">
    <property type="entry name" value="Translation proteins SH3-like domain"/>
    <property type="match status" value="1"/>
</dbReference>
<dbReference type="PROSITE" id="PS01275">
    <property type="entry name" value="EFP"/>
    <property type="match status" value="1"/>
</dbReference>
<organism>
    <name type="scientific">Synechococcus sp. (strain CC9311)</name>
    <dbReference type="NCBI Taxonomy" id="64471"/>
    <lineage>
        <taxon>Bacteria</taxon>
        <taxon>Bacillati</taxon>
        <taxon>Cyanobacteriota</taxon>
        <taxon>Cyanophyceae</taxon>
        <taxon>Synechococcales</taxon>
        <taxon>Synechococcaceae</taxon>
        <taxon>Synechococcus</taxon>
    </lineage>
</organism>
<evidence type="ECO:0000255" key="1">
    <source>
        <dbReference type="HAMAP-Rule" id="MF_00141"/>
    </source>
</evidence>
<sequence length="187" mass="20692">MISSNDFRTGTTIELDGAVWRVVEFLHVKPGKGSAFVRTKLKAVQSGSVVEKTFRAGEMLQQALLEKSTLQHTYMEGEDFVFMDMSTYEETRLTAKQIGDSRKYLKEGMEVNVVTWNEKPLEVELPNSVVLEIAQTDPGVKGDTATGGTKPAILETGAQVMVPLFLSIGEKIKVDTRNDTYLGRENG</sequence>
<keyword id="KW-0963">Cytoplasm</keyword>
<keyword id="KW-0251">Elongation factor</keyword>
<keyword id="KW-0648">Protein biosynthesis</keyword>
<keyword id="KW-1185">Reference proteome</keyword>
<gene>
    <name evidence="1" type="primary">efp</name>
    <name type="ordered locus">sync_0032</name>
</gene>
<comment type="function">
    <text evidence="1">Involved in peptide bond synthesis. Stimulates efficient translation and peptide-bond synthesis on native or reconstituted 70S ribosomes in vitro. Probably functions indirectly by altering the affinity of the ribosome for aminoacyl-tRNA, thus increasing their reactivity as acceptors for peptidyl transferase.</text>
</comment>
<comment type="pathway">
    <text evidence="1">Protein biosynthesis; polypeptide chain elongation.</text>
</comment>
<comment type="subcellular location">
    <subcellularLocation>
        <location evidence="1">Cytoplasm</location>
    </subcellularLocation>
</comment>
<comment type="similarity">
    <text evidence="1">Belongs to the elongation factor P family.</text>
</comment>
<proteinExistence type="inferred from homology"/>
<accession>Q0IE51</accession>